<evidence type="ECO:0000250" key="1"/>
<evidence type="ECO:0000250" key="2">
    <source>
        <dbReference type="UniProtKB" id="Q8IV48"/>
    </source>
</evidence>
<evidence type="ECO:0000255" key="3">
    <source>
        <dbReference type="PROSITE-ProRule" id="PRU00186"/>
    </source>
</evidence>
<evidence type="ECO:0000256" key="4">
    <source>
        <dbReference type="SAM" id="MobiDB-lite"/>
    </source>
</evidence>
<evidence type="ECO:0000269" key="5">
    <source>
    </source>
</evidence>
<evidence type="ECO:0000269" key="6">
    <source>
    </source>
</evidence>
<evidence type="ECO:0000305" key="7"/>
<keyword id="KW-0963">Cytoplasm</keyword>
<keyword id="KW-0269">Exonuclease</keyword>
<keyword id="KW-0378">Hydrolase</keyword>
<keyword id="KW-0460">Magnesium</keyword>
<keyword id="KW-0479">Metal-binding</keyword>
<keyword id="KW-0540">Nuclease</keyword>
<keyword id="KW-0539">Nucleus</keyword>
<keyword id="KW-0597">Phosphoprotein</keyword>
<keyword id="KW-1185">Reference proteome</keyword>
<keyword id="KW-0694">RNA-binding</keyword>
<keyword id="KW-0943">RNA-mediated gene silencing</keyword>
<keyword id="KW-0698">rRNA processing</keyword>
<reference key="1">
    <citation type="journal article" date="2005" name="Science">
        <title>The transcriptional landscape of the mammalian genome.</title>
        <authorList>
            <person name="Carninci P."/>
            <person name="Kasukawa T."/>
            <person name="Katayama S."/>
            <person name="Gough J."/>
            <person name="Frith M.C."/>
            <person name="Maeda N."/>
            <person name="Oyama R."/>
            <person name="Ravasi T."/>
            <person name="Lenhard B."/>
            <person name="Wells C."/>
            <person name="Kodzius R."/>
            <person name="Shimokawa K."/>
            <person name="Bajic V.B."/>
            <person name="Brenner S.E."/>
            <person name="Batalov S."/>
            <person name="Forrest A.R."/>
            <person name="Zavolan M."/>
            <person name="Davis M.J."/>
            <person name="Wilming L.G."/>
            <person name="Aidinis V."/>
            <person name="Allen J.E."/>
            <person name="Ambesi-Impiombato A."/>
            <person name="Apweiler R."/>
            <person name="Aturaliya R.N."/>
            <person name="Bailey T.L."/>
            <person name="Bansal M."/>
            <person name="Baxter L."/>
            <person name="Beisel K.W."/>
            <person name="Bersano T."/>
            <person name="Bono H."/>
            <person name="Chalk A.M."/>
            <person name="Chiu K.P."/>
            <person name="Choudhary V."/>
            <person name="Christoffels A."/>
            <person name="Clutterbuck D.R."/>
            <person name="Crowe M.L."/>
            <person name="Dalla E."/>
            <person name="Dalrymple B.P."/>
            <person name="de Bono B."/>
            <person name="Della Gatta G."/>
            <person name="di Bernardo D."/>
            <person name="Down T."/>
            <person name="Engstrom P."/>
            <person name="Fagiolini M."/>
            <person name="Faulkner G."/>
            <person name="Fletcher C.F."/>
            <person name="Fukushima T."/>
            <person name="Furuno M."/>
            <person name="Futaki S."/>
            <person name="Gariboldi M."/>
            <person name="Georgii-Hemming P."/>
            <person name="Gingeras T.R."/>
            <person name="Gojobori T."/>
            <person name="Green R.E."/>
            <person name="Gustincich S."/>
            <person name="Harbers M."/>
            <person name="Hayashi Y."/>
            <person name="Hensch T.K."/>
            <person name="Hirokawa N."/>
            <person name="Hill D."/>
            <person name="Huminiecki L."/>
            <person name="Iacono M."/>
            <person name="Ikeo K."/>
            <person name="Iwama A."/>
            <person name="Ishikawa T."/>
            <person name="Jakt M."/>
            <person name="Kanapin A."/>
            <person name="Katoh M."/>
            <person name="Kawasawa Y."/>
            <person name="Kelso J."/>
            <person name="Kitamura H."/>
            <person name="Kitano H."/>
            <person name="Kollias G."/>
            <person name="Krishnan S.P."/>
            <person name="Kruger A."/>
            <person name="Kummerfeld S.K."/>
            <person name="Kurochkin I.V."/>
            <person name="Lareau L.F."/>
            <person name="Lazarevic D."/>
            <person name="Lipovich L."/>
            <person name="Liu J."/>
            <person name="Liuni S."/>
            <person name="McWilliam S."/>
            <person name="Madan Babu M."/>
            <person name="Madera M."/>
            <person name="Marchionni L."/>
            <person name="Matsuda H."/>
            <person name="Matsuzawa S."/>
            <person name="Miki H."/>
            <person name="Mignone F."/>
            <person name="Miyake S."/>
            <person name="Morris K."/>
            <person name="Mottagui-Tabar S."/>
            <person name="Mulder N."/>
            <person name="Nakano N."/>
            <person name="Nakauchi H."/>
            <person name="Ng P."/>
            <person name="Nilsson R."/>
            <person name="Nishiguchi S."/>
            <person name="Nishikawa S."/>
            <person name="Nori F."/>
            <person name="Ohara O."/>
            <person name="Okazaki Y."/>
            <person name="Orlando V."/>
            <person name="Pang K.C."/>
            <person name="Pavan W.J."/>
            <person name="Pavesi G."/>
            <person name="Pesole G."/>
            <person name="Petrovsky N."/>
            <person name="Piazza S."/>
            <person name="Reed J."/>
            <person name="Reid J.F."/>
            <person name="Ring B.Z."/>
            <person name="Ringwald M."/>
            <person name="Rost B."/>
            <person name="Ruan Y."/>
            <person name="Salzberg S.L."/>
            <person name="Sandelin A."/>
            <person name="Schneider C."/>
            <person name="Schoenbach C."/>
            <person name="Sekiguchi K."/>
            <person name="Semple C.A."/>
            <person name="Seno S."/>
            <person name="Sessa L."/>
            <person name="Sheng Y."/>
            <person name="Shibata Y."/>
            <person name="Shimada H."/>
            <person name="Shimada K."/>
            <person name="Silva D."/>
            <person name="Sinclair B."/>
            <person name="Sperling S."/>
            <person name="Stupka E."/>
            <person name="Sugiura K."/>
            <person name="Sultana R."/>
            <person name="Takenaka Y."/>
            <person name="Taki K."/>
            <person name="Tammoja K."/>
            <person name="Tan S.L."/>
            <person name="Tang S."/>
            <person name="Taylor M.S."/>
            <person name="Tegner J."/>
            <person name="Teichmann S.A."/>
            <person name="Ueda H.R."/>
            <person name="van Nimwegen E."/>
            <person name="Verardo R."/>
            <person name="Wei C.L."/>
            <person name="Yagi K."/>
            <person name="Yamanishi H."/>
            <person name="Zabarovsky E."/>
            <person name="Zhu S."/>
            <person name="Zimmer A."/>
            <person name="Hide W."/>
            <person name="Bult C."/>
            <person name="Grimmond S.M."/>
            <person name="Teasdale R.D."/>
            <person name="Liu E.T."/>
            <person name="Brusic V."/>
            <person name="Quackenbush J."/>
            <person name="Wahlestedt C."/>
            <person name="Mattick J.S."/>
            <person name="Hume D.A."/>
            <person name="Kai C."/>
            <person name="Sasaki D."/>
            <person name="Tomaru Y."/>
            <person name="Fukuda S."/>
            <person name="Kanamori-Katayama M."/>
            <person name="Suzuki M."/>
            <person name="Aoki J."/>
            <person name="Arakawa T."/>
            <person name="Iida J."/>
            <person name="Imamura K."/>
            <person name="Itoh M."/>
            <person name="Kato T."/>
            <person name="Kawaji H."/>
            <person name="Kawagashira N."/>
            <person name="Kawashima T."/>
            <person name="Kojima M."/>
            <person name="Kondo S."/>
            <person name="Konno H."/>
            <person name="Nakano K."/>
            <person name="Ninomiya N."/>
            <person name="Nishio T."/>
            <person name="Okada M."/>
            <person name="Plessy C."/>
            <person name="Shibata K."/>
            <person name="Shiraki T."/>
            <person name="Suzuki S."/>
            <person name="Tagami M."/>
            <person name="Waki K."/>
            <person name="Watahiki A."/>
            <person name="Okamura-Oho Y."/>
            <person name="Suzuki H."/>
            <person name="Kawai J."/>
            <person name="Hayashizaki Y."/>
        </authorList>
    </citation>
    <scope>NUCLEOTIDE SEQUENCE [LARGE SCALE MRNA]</scope>
    <source>
        <strain>C57BL/6J</strain>
        <strain>NOD</strain>
        <tissue>Embryo</tissue>
        <tissue>Eye</tissue>
        <tissue>Head</tissue>
        <tissue>Liver</tissue>
        <tissue>Spleen</tissue>
    </source>
</reference>
<reference key="2">
    <citation type="journal article" date="2004" name="Genome Res.">
        <title>The status, quality, and expansion of the NIH full-length cDNA project: the Mammalian Gene Collection (MGC).</title>
        <authorList>
            <consortium name="The MGC Project Team"/>
        </authorList>
    </citation>
    <scope>NUCLEOTIDE SEQUENCE [LARGE SCALE MRNA]</scope>
    <source>
        <strain>FVB/N</strain>
        <tissue>Mammary tumor</tissue>
    </source>
</reference>
<reference key="3">
    <citation type="journal article" date="2008" name="Nat. Struct. Mol. Biol.">
        <title>Mouse Eri1 interacts with the ribosome and catalyzes 5.8S rRNA processing.</title>
        <authorList>
            <person name="Ansel K.M."/>
            <person name="Pastor W.A."/>
            <person name="Rath N."/>
            <person name="Lapan A.D."/>
            <person name="Glasmacher E."/>
            <person name="Wolf C."/>
            <person name="Smith L.C."/>
            <person name="Papadopoulou N."/>
            <person name="Lamperti E.D."/>
            <person name="Tahiliani M."/>
            <person name="Ellwart J.W."/>
            <person name="Shi Y."/>
            <person name="Kremmer E."/>
            <person name="Rao A."/>
            <person name="Heissmeyer V."/>
        </authorList>
    </citation>
    <scope>FUNCTION</scope>
    <scope>SUBUNIT</scope>
    <scope>SUBCELLULAR LOCATION</scope>
    <scope>TISSUE SPECIFICITY</scope>
    <scope>DISRUPTION PHENOTYPE</scope>
    <scope>MUTAGENESIS OF LYS-107; LYS-108; ASP-130 AND GLU-132</scope>
</reference>
<reference key="4">
    <citation type="journal article" date="2009" name="Mol. Cell. Biol.">
        <title>Three proteins of the U7-specific Sm ring function as the molecular ruler to determine the site of 3'-end processing in mammalian histone pre-mRNA.</title>
        <authorList>
            <person name="Yang X.-C."/>
            <person name="Torres M.P."/>
            <person name="Marzluff W.F."/>
            <person name="Dominski Z."/>
        </authorList>
    </citation>
    <scope>IDENTIFICATION IN A HISTONE PRE-MRNA COMPLEX</scope>
    <scope>RNA-BINDING</scope>
</reference>
<reference key="5">
    <citation type="journal article" date="2010" name="Cell">
        <title>A tissue-specific atlas of mouse protein phosphorylation and expression.</title>
        <authorList>
            <person name="Huttlin E.L."/>
            <person name="Jedrychowski M.P."/>
            <person name="Elias J.E."/>
            <person name="Goswami T."/>
            <person name="Rad R."/>
            <person name="Beausoleil S.A."/>
            <person name="Villen J."/>
            <person name="Haas W."/>
            <person name="Sowa M.E."/>
            <person name="Gygi S.P."/>
        </authorList>
    </citation>
    <scope>IDENTIFICATION BY MASS SPECTROMETRY [LARGE SCALE ANALYSIS]</scope>
    <source>
        <tissue>Spleen</tissue>
    </source>
</reference>
<reference key="6">
    <citation type="journal article" date="2023" name="Am. J. Hum. Genet.">
        <title>Null and missense mutations of ERI1 cause a recessive phenotypic dichotomy in humans.</title>
        <authorList>
            <person name="Guo L."/>
            <person name="Salian S."/>
            <person name="Xue J.Y."/>
            <person name="Rath N."/>
            <person name="Rousseau J."/>
            <person name="Kim H."/>
            <person name="Ehresmann S."/>
            <person name="Moosa S."/>
            <person name="Nakagawa N."/>
            <person name="Kuroda H."/>
            <person name="Clayton-Smith J."/>
            <person name="Wang J."/>
            <person name="Wang Z."/>
            <person name="Banka S."/>
            <person name="Jackson A."/>
            <person name="Zhang Y.M."/>
            <person name="Wei Z.J."/>
            <person name="Huening I."/>
            <person name="Brunet T."/>
            <person name="Ohashi H."/>
            <person name="Thomas M.F."/>
            <person name="Bupp C."/>
            <person name="Miyake N."/>
            <person name="Matsumoto N."/>
            <person name="Mendoza-Londono R."/>
            <person name="Costain G."/>
            <person name="Hahn G."/>
            <person name="Di Donato N."/>
            <person name="Yigit G."/>
            <person name="Yamada T."/>
            <person name="Nishimura G."/>
            <person name="Ansel K.M."/>
            <person name="Wollnik B."/>
            <person name="Hrabe de Angelis M."/>
            <person name="Megarbane A."/>
            <person name="Rosenfeld J.A."/>
            <person name="Heissmeyer V."/>
            <person name="Ikegawa S."/>
            <person name="Campeau P.M."/>
        </authorList>
    </citation>
    <scope>DISRUPTION PHENOTYPE</scope>
    <scope>FUNCTION</scope>
</reference>
<protein>
    <recommendedName>
        <fullName>3'-5' exoribonuclease 1</fullName>
        <ecNumber evidence="2">3.1.13.1</ecNumber>
    </recommendedName>
    <alternativeName>
        <fullName>3'-5' exonuclease ERI1</fullName>
    </alternativeName>
    <alternativeName>
        <fullName>Eri-1 homolog</fullName>
    </alternativeName>
    <alternativeName>
        <fullName>Histone mRNA 3'-exonuclease 1</fullName>
    </alternativeName>
</protein>
<sequence length="345" mass="39493">MEDERGRERGGDAAQQKTPRPECEESRPLSVEKKQRCRLDGKETDGSKFISSNGSDFSDPVYKEIAMTNGCINRMSKEELRAKLSEFKLETRGVKDVLKKRLKNYYKKQKLMLKESSAGDSYYDYICIIDFEATCEEGNPAEFLHEIIEFPVVLLNTHTLEIEDTFQQYVRPEVNAQLSEFCIGLTGITQDQVDRADAFPQVLKKVIEWMKSKELGTKYKYCILTDGSWDMSKFLSIQCRLSRLKHPAFAKKWINIRKSYGNFYKVPRSQTKLTIMLEKLGMDYDGRPHSGLDDSKNIARIAVRMLQDGCELRINEKILGGQLMSVSSSLPVEGAPAPQMPHSRK</sequence>
<feature type="chain" id="PRO_0000187008" description="3'-5' exoribonuclease 1">
    <location>
        <begin position="1"/>
        <end position="345"/>
    </location>
</feature>
<feature type="domain" description="SAP" evidence="3">
    <location>
        <begin position="72"/>
        <end position="106"/>
    </location>
</feature>
<feature type="domain" description="Exonuclease">
    <location>
        <begin position="126"/>
        <end position="302"/>
    </location>
</feature>
<feature type="region of interest" description="Disordered" evidence="4">
    <location>
        <begin position="1"/>
        <end position="50"/>
    </location>
</feature>
<feature type="compositionally biased region" description="Basic and acidic residues" evidence="4">
    <location>
        <begin position="1"/>
        <end position="11"/>
    </location>
</feature>
<feature type="compositionally biased region" description="Basic and acidic residues" evidence="4">
    <location>
        <begin position="19"/>
        <end position="46"/>
    </location>
</feature>
<feature type="active site" description="Proton acceptor" evidence="2">
    <location>
        <position position="132"/>
    </location>
</feature>
<feature type="active site" description="Proton acceptor" evidence="2">
    <location>
        <position position="289"/>
    </location>
</feature>
<feature type="binding site" evidence="2">
    <location>
        <position position="130"/>
    </location>
    <ligand>
        <name>Mg(2+)</name>
        <dbReference type="ChEBI" id="CHEBI:18420"/>
        <label>1</label>
    </ligand>
</feature>
<feature type="binding site" evidence="2">
    <location>
        <position position="130"/>
    </location>
    <ligand>
        <name>Mg(2+)</name>
        <dbReference type="ChEBI" id="CHEBI:18420"/>
        <label>2</label>
    </ligand>
</feature>
<feature type="binding site" evidence="2">
    <location>
        <position position="132"/>
    </location>
    <ligand>
        <name>AMP</name>
        <dbReference type="ChEBI" id="CHEBI:456215"/>
    </ligand>
</feature>
<feature type="binding site" evidence="2">
    <location>
        <position position="132"/>
    </location>
    <ligand>
        <name>Mg(2+)</name>
        <dbReference type="ChEBI" id="CHEBI:18420"/>
        <label>1</label>
    </ligand>
</feature>
<feature type="binding site" evidence="2">
    <location>
        <position position="133"/>
    </location>
    <ligand>
        <name>AMP</name>
        <dbReference type="ChEBI" id="CHEBI:456215"/>
    </ligand>
</feature>
<feature type="binding site" evidence="2">
    <location>
        <position position="230"/>
    </location>
    <ligand>
        <name>Mg(2+)</name>
        <dbReference type="ChEBI" id="CHEBI:18420"/>
        <label>2</label>
    </ligand>
</feature>
<feature type="binding site" evidence="2">
    <location>
        <position position="289"/>
    </location>
    <ligand>
        <name>AMP</name>
        <dbReference type="ChEBI" id="CHEBI:456215"/>
    </ligand>
</feature>
<feature type="binding site" evidence="2">
    <location>
        <position position="294"/>
    </location>
    <ligand>
        <name>Mg(2+)</name>
        <dbReference type="ChEBI" id="CHEBI:18420"/>
        <label>1</label>
    </ligand>
</feature>
<feature type="modified residue" description="Phosphoserine" evidence="2">
    <location>
        <position position="55"/>
    </location>
</feature>
<feature type="modified residue" description="Phosphoserine" evidence="2">
    <location>
        <position position="58"/>
    </location>
</feature>
<feature type="mutagenesis site" description="Impairs binding to and processing of 5.8S rRNA; when associated with A-108." evidence="5">
    <original>K</original>
    <variation>A</variation>
    <location>
        <position position="107"/>
    </location>
</feature>
<feature type="mutagenesis site" description="Impairs binding to and processing of 5.8S rRNA; when associated with A-107." evidence="5">
    <original>K</original>
    <variation>A</variation>
    <location>
        <position position="108"/>
    </location>
</feature>
<feature type="mutagenesis site" description="No effect on binding to 5.8S rRNA; when associated with G-132." evidence="5">
    <original>D</original>
    <variation>G</variation>
    <location>
        <position position="130"/>
    </location>
</feature>
<feature type="mutagenesis site" description="No effect on binding to 5.8S rRNA; when associated with G-130." evidence="5">
    <original>E</original>
    <variation>G</variation>
    <location>
        <position position="132"/>
    </location>
</feature>
<feature type="sequence conflict" description="In Ref. 1; BAB29127." evidence="7" ref="1">
    <original>QQ</original>
    <variation>HE</variation>
    <location>
        <begin position="15"/>
        <end position="16"/>
    </location>
</feature>
<feature type="sequence conflict" description="In Ref. 1; BAB29127/BAB29333/BAE38007." evidence="7" ref="1">
    <original>A</original>
    <variation>D</variation>
    <location>
        <position position="176"/>
    </location>
</feature>
<feature type="sequence conflict" description="In Ref. 1; BAB29127/BAB29333/BAC34136/BAE38007." evidence="7" ref="1">
    <original>V</original>
    <variation>I</variation>
    <location>
        <position position="303"/>
    </location>
</feature>
<feature type="sequence conflict" description="In Ref. 1; BAC34136." evidence="7" ref="1">
    <original>R</original>
    <variation>K</variation>
    <location>
        <position position="344"/>
    </location>
</feature>
<accession>Q7TMF2</accession>
<accession>Q3TA98</accession>
<accession>Q3TNT0</accession>
<accession>Q80UN4</accession>
<accession>Q8BWR6</accession>
<accession>Q9CQ63</accession>
<proteinExistence type="evidence at protein level"/>
<organism>
    <name type="scientific">Mus musculus</name>
    <name type="common">Mouse</name>
    <dbReference type="NCBI Taxonomy" id="10090"/>
    <lineage>
        <taxon>Eukaryota</taxon>
        <taxon>Metazoa</taxon>
        <taxon>Chordata</taxon>
        <taxon>Craniata</taxon>
        <taxon>Vertebrata</taxon>
        <taxon>Euteleostomi</taxon>
        <taxon>Mammalia</taxon>
        <taxon>Eutheria</taxon>
        <taxon>Euarchontoglires</taxon>
        <taxon>Glires</taxon>
        <taxon>Rodentia</taxon>
        <taxon>Myomorpha</taxon>
        <taxon>Muroidea</taxon>
        <taxon>Muridae</taxon>
        <taxon>Murinae</taxon>
        <taxon>Mus</taxon>
        <taxon>Mus</taxon>
    </lineage>
</organism>
<comment type="function">
    <text evidence="2 5 6">RNA exonuclease that binds to the 3'-end of histone mRNAs and degrades them, suggesting that it plays an essential role in histone mRNA decay after replication. A 2' and 3'-hydroxyl groups at the last nucleotide of the histone 3'-end is required for efficient 3'-end histone mRNA exonuclease activity and degradation of RNA substrates. Also able to degrade the 3'-overhangs of short interfering RNAs (siRNAs) in vitro, suggesting a possible role as regulator of RNA interference (RNAi). Required for binding the 5'-ACCCA-3' sequence present in stem-loop structure. Able to bind other mRNAs (By similarity). Required for 5.8S rRNA 3'-end processing. Also binds to 5.8s ribosomal RNA (PubMed:18438418). Binds with high affinity to the stem-loop structure of replication-dependent histone pre-mRNAs. In vitro, does not have sequence specificity. In vitro, has weak DNA exonuclease activity. In vitro, shows biphasic kinetics such that there is rapid hydrolysis of the last three unpaired RNA nucleotides in the 39 flanking sequence followed by a much slower cleavage through the stem that occurs over a longer incubation period in the order of hours (By similarity). ERI1-mediated RNA metabolism plays a key role in chondrogenesis (PubMed:37352860).</text>
</comment>
<comment type="catalytic activity">
    <reaction evidence="2">
        <text>Exonucleolytic cleavage in the 3'- to 5'-direction to yield nucleoside 5'-phosphates.</text>
        <dbReference type="EC" id="3.1.13.1"/>
    </reaction>
</comment>
<comment type="cofactor">
    <cofactor evidence="2">
        <name>Mg(2+)</name>
        <dbReference type="ChEBI" id="CHEBI:18420"/>
    </cofactor>
    <text evidence="2">Binds 2 magnesium ions per subunit.</text>
</comment>
<comment type="activity regulation">
    <text evidence="2">Although it can bind simultaneously with SLBP to the 3'-end of histone mRNA, the presence of SLBP prevents the exonuclease activity.</text>
</comment>
<comment type="subunit">
    <text evidence="2">Identified in a histone pre-mRNA complex, at least composed of ERI1, LSM11, SLBP, SNRPB, SYNCRIP and YBX1. Binds to 40S and 60S ribosomal subunits and to 80S assembled ribosomes. Interacts in a cooperative manner with SLBP to the mature 3'-end of histone mRNAs. Found in a ternary complex with SLBP and the stem-loop structure of the 3'-end of histone mRNAs (By similarity).</text>
</comment>
<comment type="interaction">
    <interactant intactId="EBI-16026214">
        <id>Q7TMF2</id>
    </interactant>
    <interactant intactId="EBI-16026183">
        <id>Q8VC85</id>
        <label>Lsm1</label>
    </interactant>
    <organismsDiffer>false</organismsDiffer>
    <experiments>3</experiments>
</comment>
<comment type="interaction">
    <interactant intactId="EBI-16026214">
        <id>Q7TMF2</id>
    </interactant>
    <interactant intactId="EBI-6876715">
        <id>Q9EPU0</id>
        <label>Upf1</label>
    </interactant>
    <organismsDiffer>false</organismsDiffer>
    <experiments>2</experiments>
</comment>
<comment type="subcellular location">
    <subcellularLocation>
        <location evidence="5">Cytoplasm</location>
    </subcellularLocation>
    <subcellularLocation>
        <location evidence="5">Nucleus</location>
    </subcellularLocation>
    <subcellularLocation>
        <location evidence="5">Nucleus</location>
        <location evidence="5">Nucleolus</location>
    </subcellularLocation>
</comment>
<comment type="tissue specificity">
    <text evidence="5">Widely expressed with high levels in spleen, thymus and testis (at protein level).</text>
</comment>
<comment type="domain">
    <text evidence="1">The SAP domain is necessary for binding to the stem-loop structure of histone mRNAs and to form the ternary complex with SLBP, but not for 3'-end histone mRNA exonuclease activity.</text>
</comment>
<comment type="disruption phenotype">
    <text evidence="5 6">High neonatal mortality rate. Reduced body size in surviving mice which is observed as early as embryonic day 15.5 and remains significant in adults (PubMed:18438418). Knockout mice show brachydactyly, platyspondyly, and no obvious changes in the epimetaphyseal regions of the long tubular bones (PubMed:37352860).</text>
</comment>
<name>ERI1_MOUSE</name>
<gene>
    <name type="primary">Eri1</name>
    <name type="synonym">3'exo</name>
    <name type="synonym">Thex1</name>
</gene>
<dbReference type="EC" id="3.1.13.1" evidence="2"/>
<dbReference type="EMBL" id="AK014041">
    <property type="protein sequence ID" value="BAB29127.2"/>
    <property type="molecule type" value="mRNA"/>
</dbReference>
<dbReference type="EMBL" id="AK014410">
    <property type="protein sequence ID" value="BAB29333.2"/>
    <property type="molecule type" value="mRNA"/>
</dbReference>
<dbReference type="EMBL" id="AK050230">
    <property type="protein sequence ID" value="BAC34136.1"/>
    <property type="molecule type" value="mRNA"/>
</dbReference>
<dbReference type="EMBL" id="AK165026">
    <property type="protein sequence ID" value="BAE38007.1"/>
    <property type="molecule type" value="mRNA"/>
</dbReference>
<dbReference type="EMBL" id="AK172005">
    <property type="protein sequence ID" value="BAE42771.1"/>
    <property type="molecule type" value="mRNA"/>
</dbReference>
<dbReference type="EMBL" id="BC046412">
    <property type="protein sequence ID" value="AAH46412.1"/>
    <property type="molecule type" value="mRNA"/>
</dbReference>
<dbReference type="CCDS" id="CCDS22244.1"/>
<dbReference type="RefSeq" id="NP_080343.4">
    <property type="nucleotide sequence ID" value="NM_026067.3"/>
</dbReference>
<dbReference type="SMR" id="Q7TMF2"/>
<dbReference type="BioGRID" id="212065">
    <property type="interactions" value="1"/>
</dbReference>
<dbReference type="CORUM" id="Q7TMF2"/>
<dbReference type="DIP" id="DIP-60112N"/>
<dbReference type="FunCoup" id="Q7TMF2">
    <property type="interactions" value="3082"/>
</dbReference>
<dbReference type="IntAct" id="Q7TMF2">
    <property type="interactions" value="3"/>
</dbReference>
<dbReference type="STRING" id="10090.ENSMUSP00000033927"/>
<dbReference type="iPTMnet" id="Q7TMF2"/>
<dbReference type="PhosphoSitePlus" id="Q7TMF2"/>
<dbReference type="PaxDb" id="10090-ENSMUSP00000033927"/>
<dbReference type="PeptideAtlas" id="Q7TMF2"/>
<dbReference type="ProteomicsDB" id="275779"/>
<dbReference type="Pumba" id="Q7TMF2"/>
<dbReference type="DNASU" id="67276"/>
<dbReference type="GeneID" id="67276"/>
<dbReference type="KEGG" id="mmu:67276"/>
<dbReference type="UCSC" id="uc009lky.2">
    <property type="organism name" value="mouse"/>
</dbReference>
<dbReference type="AGR" id="MGI:1914526"/>
<dbReference type="CTD" id="90459"/>
<dbReference type="MGI" id="MGI:1914526">
    <property type="gene designation" value="Eri1"/>
</dbReference>
<dbReference type="eggNOG" id="KOG0542">
    <property type="taxonomic scope" value="Eukaryota"/>
</dbReference>
<dbReference type="InParanoid" id="Q7TMF2"/>
<dbReference type="OrthoDB" id="448399at2759"/>
<dbReference type="PhylomeDB" id="Q7TMF2"/>
<dbReference type="TreeFam" id="TF313449"/>
<dbReference type="Reactome" id="R-MMU-6791226">
    <property type="pathway name" value="Major pathway of rRNA processing in the nucleolus and cytosol"/>
</dbReference>
<dbReference type="BioGRID-ORCS" id="67276">
    <property type="hits" value="15 hits in 79 CRISPR screens"/>
</dbReference>
<dbReference type="ChiTaRS" id="Eri1">
    <property type="organism name" value="mouse"/>
</dbReference>
<dbReference type="PRO" id="PR:Q7TMF2"/>
<dbReference type="Proteomes" id="UP000000589">
    <property type="component" value="Unplaced"/>
</dbReference>
<dbReference type="RNAct" id="Q7TMF2">
    <property type="molecule type" value="protein"/>
</dbReference>
<dbReference type="GO" id="GO:0005737">
    <property type="term" value="C:cytoplasm"/>
    <property type="evidence" value="ECO:0000314"/>
    <property type="project" value="UniProtKB"/>
</dbReference>
<dbReference type="GO" id="GO:0071204">
    <property type="term" value="C:histone pre-mRNA 3'end processing complex"/>
    <property type="evidence" value="ECO:0000314"/>
    <property type="project" value="UniProtKB"/>
</dbReference>
<dbReference type="GO" id="GO:0005730">
    <property type="term" value="C:nucleolus"/>
    <property type="evidence" value="ECO:0000314"/>
    <property type="project" value="UniProtKB"/>
</dbReference>
<dbReference type="GO" id="GO:0005634">
    <property type="term" value="C:nucleus"/>
    <property type="evidence" value="ECO:0000314"/>
    <property type="project" value="UniProtKB"/>
</dbReference>
<dbReference type="GO" id="GO:0008408">
    <property type="term" value="F:3'-5' exonuclease activity"/>
    <property type="evidence" value="ECO:0000250"/>
    <property type="project" value="UniProtKB"/>
</dbReference>
<dbReference type="GO" id="GO:0000175">
    <property type="term" value="F:3'-5'-RNA exonuclease activity"/>
    <property type="evidence" value="ECO:0007669"/>
    <property type="project" value="InterPro"/>
</dbReference>
<dbReference type="GO" id="GO:0071207">
    <property type="term" value="F:histone pre-mRNA stem-loop binding"/>
    <property type="evidence" value="ECO:0000314"/>
    <property type="project" value="UniProtKB"/>
</dbReference>
<dbReference type="GO" id="GO:0046872">
    <property type="term" value="F:metal ion binding"/>
    <property type="evidence" value="ECO:0007669"/>
    <property type="project" value="UniProtKB-KW"/>
</dbReference>
<dbReference type="GO" id="GO:0043022">
    <property type="term" value="F:ribosome binding"/>
    <property type="evidence" value="ECO:0000314"/>
    <property type="project" value="UniProtKB"/>
</dbReference>
<dbReference type="GO" id="GO:0019843">
    <property type="term" value="F:rRNA binding"/>
    <property type="evidence" value="ECO:0000314"/>
    <property type="project" value="UniProtKB"/>
</dbReference>
<dbReference type="GO" id="GO:0031047">
    <property type="term" value="P:regulatory ncRNA-mediated gene silencing"/>
    <property type="evidence" value="ECO:0007669"/>
    <property type="project" value="UniProtKB-KW"/>
</dbReference>
<dbReference type="GO" id="GO:0031125">
    <property type="term" value="P:rRNA 3'-end processing"/>
    <property type="evidence" value="ECO:0000314"/>
    <property type="project" value="UniProtKB"/>
</dbReference>
<dbReference type="CDD" id="cd06133">
    <property type="entry name" value="ERI-1_3'hExo_like"/>
    <property type="match status" value="1"/>
</dbReference>
<dbReference type="FunFam" id="1.10.720.30:FF:000015">
    <property type="entry name" value="3'-5' exoribonuclease 1"/>
    <property type="match status" value="1"/>
</dbReference>
<dbReference type="FunFam" id="3.30.420.10:FF:000034">
    <property type="entry name" value="3'-5' exoribonuclease 1"/>
    <property type="match status" value="1"/>
</dbReference>
<dbReference type="Gene3D" id="3.30.420.10">
    <property type="entry name" value="Ribonuclease H-like superfamily/Ribonuclease H"/>
    <property type="match status" value="1"/>
</dbReference>
<dbReference type="Gene3D" id="1.10.720.30">
    <property type="entry name" value="SAP domain"/>
    <property type="match status" value="1"/>
</dbReference>
<dbReference type="InterPro" id="IPR051274">
    <property type="entry name" value="3-5_Exoribonuclease"/>
</dbReference>
<dbReference type="InterPro" id="IPR047201">
    <property type="entry name" value="ERI-1_3'hExo-like"/>
</dbReference>
<dbReference type="InterPro" id="IPR013520">
    <property type="entry name" value="Exonuclease_RNaseT/DNA_pol3"/>
</dbReference>
<dbReference type="InterPro" id="IPR012337">
    <property type="entry name" value="RNaseH-like_sf"/>
</dbReference>
<dbReference type="InterPro" id="IPR036397">
    <property type="entry name" value="RNaseH_sf"/>
</dbReference>
<dbReference type="InterPro" id="IPR003034">
    <property type="entry name" value="SAP_dom"/>
</dbReference>
<dbReference type="InterPro" id="IPR036361">
    <property type="entry name" value="SAP_dom_sf"/>
</dbReference>
<dbReference type="PANTHER" id="PTHR23044">
    <property type="entry name" value="3'-5' EXONUCLEASE ERI1-RELATED"/>
    <property type="match status" value="1"/>
</dbReference>
<dbReference type="PANTHER" id="PTHR23044:SF61">
    <property type="entry name" value="3'-5' EXORIBONUCLEASE 1-RELATED"/>
    <property type="match status" value="1"/>
</dbReference>
<dbReference type="Pfam" id="PF00929">
    <property type="entry name" value="RNase_T"/>
    <property type="match status" value="1"/>
</dbReference>
<dbReference type="Pfam" id="PF02037">
    <property type="entry name" value="SAP"/>
    <property type="match status" value="1"/>
</dbReference>
<dbReference type="SMART" id="SM00479">
    <property type="entry name" value="EXOIII"/>
    <property type="match status" value="1"/>
</dbReference>
<dbReference type="SMART" id="SM00513">
    <property type="entry name" value="SAP"/>
    <property type="match status" value="1"/>
</dbReference>
<dbReference type="SUPFAM" id="SSF53098">
    <property type="entry name" value="Ribonuclease H-like"/>
    <property type="match status" value="1"/>
</dbReference>
<dbReference type="SUPFAM" id="SSF68906">
    <property type="entry name" value="SAP domain"/>
    <property type="match status" value="1"/>
</dbReference>
<dbReference type="PROSITE" id="PS50800">
    <property type="entry name" value="SAP"/>
    <property type="match status" value="1"/>
</dbReference>